<proteinExistence type="inferred from homology"/>
<protein>
    <recommendedName>
        <fullName>RNA polymerase II holoenzyme cyclin-like subunit</fullName>
    </recommendedName>
</protein>
<organism>
    <name type="scientific">Aspergillus oryzae (strain ATCC 42149 / RIB 40)</name>
    <name type="common">Yellow koji mold</name>
    <dbReference type="NCBI Taxonomy" id="510516"/>
    <lineage>
        <taxon>Eukaryota</taxon>
        <taxon>Fungi</taxon>
        <taxon>Dikarya</taxon>
        <taxon>Ascomycota</taxon>
        <taxon>Pezizomycotina</taxon>
        <taxon>Eurotiomycetes</taxon>
        <taxon>Eurotiomycetidae</taxon>
        <taxon>Eurotiales</taxon>
        <taxon>Aspergillaceae</taxon>
        <taxon>Aspergillus</taxon>
        <taxon>Aspergillus subgen. Circumdati</taxon>
    </lineage>
</organism>
<name>SSN8_ASPOR</name>
<evidence type="ECO:0000250" key="1"/>
<evidence type="ECO:0000305" key="2"/>
<sequence>MAANYWASTQRRHWLFTKERLADIRESFRERDKAAHSQFPLPDQRLLNIYFSQQLIKLGKRMSTRQQALATAQVYIKRFYTKNEIRHTNPYLVVTTAFYLACKMEECPQHIRFVVAEARNFWPEFIAPDVSKLGECEFALISEMNSQLIVHHPYRTLSELQPELSLTSDEVALAWSVINDHYLTDLPLLYPPHVIAVMAIIVAVVFKPSQTSFHGTAAPLAGAMRDGGMNILAALGDKNGAGPPPRIQKLVGWLAESEVDIRAVIECTQELVSLYEIWENYSEKHCKELLGRMVKSKNLDK</sequence>
<feature type="chain" id="PRO_0000314268" description="RNA polymerase II holoenzyme cyclin-like subunit">
    <location>
        <begin position="1"/>
        <end position="301"/>
    </location>
</feature>
<feature type="domain" description="Cyclin N-terminal">
    <location>
        <begin position="53"/>
        <end position="142"/>
    </location>
</feature>
<accession>Q2UDB2</accession>
<gene>
    <name type="primary">ssn8</name>
    <name type="ORF">AO090012000244</name>
</gene>
<keyword id="KW-0010">Activator</keyword>
<keyword id="KW-0195">Cyclin</keyword>
<keyword id="KW-0539">Nucleus</keyword>
<keyword id="KW-1185">Reference proteome</keyword>
<keyword id="KW-0678">Repressor</keyword>
<keyword id="KW-0804">Transcription</keyword>
<keyword id="KW-0805">Transcription regulation</keyword>
<dbReference type="EMBL" id="BA000052">
    <property type="protein sequence ID" value="BAE60453.1"/>
    <property type="status" value="ALT_SEQ"/>
    <property type="molecule type" value="Genomic_DNA"/>
</dbReference>
<dbReference type="RefSeq" id="XP_001727292.2">
    <property type="nucleotide sequence ID" value="XM_001727240.2"/>
</dbReference>
<dbReference type="SMR" id="Q2UDB2"/>
<dbReference type="STRING" id="510516.Q2UDB2"/>
<dbReference type="EnsemblFungi" id="BAE60453">
    <property type="protein sequence ID" value="BAE60453"/>
    <property type="gene ID" value="AO090012000244"/>
</dbReference>
<dbReference type="VEuPathDB" id="FungiDB:AO090012000244"/>
<dbReference type="OMA" id="CLLHPPH"/>
<dbReference type="Proteomes" id="UP000006564">
    <property type="component" value="Chromosome 4"/>
</dbReference>
<dbReference type="GO" id="GO:0005634">
    <property type="term" value="C:nucleus"/>
    <property type="evidence" value="ECO:0007669"/>
    <property type="project" value="UniProtKB-SubCell"/>
</dbReference>
<dbReference type="GO" id="GO:0016538">
    <property type="term" value="F:cyclin-dependent protein serine/threonine kinase regulator activity"/>
    <property type="evidence" value="ECO:0007669"/>
    <property type="project" value="InterPro"/>
</dbReference>
<dbReference type="GO" id="GO:0006357">
    <property type="term" value="P:regulation of transcription by RNA polymerase II"/>
    <property type="evidence" value="ECO:0007669"/>
    <property type="project" value="InterPro"/>
</dbReference>
<dbReference type="CDD" id="cd20513">
    <property type="entry name" value="CYCLIN_CCNC_rpt1"/>
    <property type="match status" value="1"/>
</dbReference>
<dbReference type="FunFam" id="1.10.472.10:FF:000092">
    <property type="entry name" value="RNA polymerase II holoenzyme cyclin-like subunit"/>
    <property type="match status" value="1"/>
</dbReference>
<dbReference type="Gene3D" id="1.10.472.10">
    <property type="entry name" value="Cyclin-like"/>
    <property type="match status" value="2"/>
</dbReference>
<dbReference type="InterPro" id="IPR013763">
    <property type="entry name" value="Cyclin-like_dom"/>
</dbReference>
<dbReference type="InterPro" id="IPR036915">
    <property type="entry name" value="Cyclin-like_sf"/>
</dbReference>
<dbReference type="InterPro" id="IPR043198">
    <property type="entry name" value="Cyclin/Ssn8"/>
</dbReference>
<dbReference type="InterPro" id="IPR006671">
    <property type="entry name" value="Cyclin_N"/>
</dbReference>
<dbReference type="PANTHER" id="PTHR10026">
    <property type="entry name" value="CYCLIN"/>
    <property type="match status" value="1"/>
</dbReference>
<dbReference type="Pfam" id="PF00134">
    <property type="entry name" value="Cyclin_N"/>
    <property type="match status" value="1"/>
</dbReference>
<dbReference type="PIRSF" id="PIRSF028758">
    <property type="entry name" value="Cyclin, C/H/G types"/>
    <property type="match status" value="1"/>
</dbReference>
<dbReference type="SMART" id="SM00385">
    <property type="entry name" value="CYCLIN"/>
    <property type="match status" value="1"/>
</dbReference>
<dbReference type="SUPFAM" id="SSF47954">
    <property type="entry name" value="Cyclin-like"/>
    <property type="match status" value="2"/>
</dbReference>
<reference key="1">
    <citation type="journal article" date="2005" name="Nature">
        <title>Genome sequencing and analysis of Aspergillus oryzae.</title>
        <authorList>
            <person name="Machida M."/>
            <person name="Asai K."/>
            <person name="Sano M."/>
            <person name="Tanaka T."/>
            <person name="Kumagai T."/>
            <person name="Terai G."/>
            <person name="Kusumoto K."/>
            <person name="Arima T."/>
            <person name="Akita O."/>
            <person name="Kashiwagi Y."/>
            <person name="Abe K."/>
            <person name="Gomi K."/>
            <person name="Horiuchi H."/>
            <person name="Kitamoto K."/>
            <person name="Kobayashi T."/>
            <person name="Takeuchi M."/>
            <person name="Denning D.W."/>
            <person name="Galagan J.E."/>
            <person name="Nierman W.C."/>
            <person name="Yu J."/>
            <person name="Archer D.B."/>
            <person name="Bennett J.W."/>
            <person name="Bhatnagar D."/>
            <person name="Cleveland T.E."/>
            <person name="Fedorova N.D."/>
            <person name="Gotoh O."/>
            <person name="Horikawa H."/>
            <person name="Hosoyama A."/>
            <person name="Ichinomiya M."/>
            <person name="Igarashi R."/>
            <person name="Iwashita K."/>
            <person name="Juvvadi P.R."/>
            <person name="Kato M."/>
            <person name="Kato Y."/>
            <person name="Kin T."/>
            <person name="Kokubun A."/>
            <person name="Maeda H."/>
            <person name="Maeyama N."/>
            <person name="Maruyama J."/>
            <person name="Nagasaki H."/>
            <person name="Nakajima T."/>
            <person name="Oda K."/>
            <person name="Okada K."/>
            <person name="Paulsen I."/>
            <person name="Sakamoto K."/>
            <person name="Sawano T."/>
            <person name="Takahashi M."/>
            <person name="Takase K."/>
            <person name="Terabayashi Y."/>
            <person name="Wortman J.R."/>
            <person name="Yamada O."/>
            <person name="Yamagata Y."/>
            <person name="Anazawa H."/>
            <person name="Hata Y."/>
            <person name="Koide Y."/>
            <person name="Komori T."/>
            <person name="Koyama Y."/>
            <person name="Minetoki T."/>
            <person name="Suharnan S."/>
            <person name="Tanaka A."/>
            <person name="Isono K."/>
            <person name="Kuhara S."/>
            <person name="Ogasawara N."/>
            <person name="Kikuchi H."/>
        </authorList>
    </citation>
    <scope>NUCLEOTIDE SEQUENCE [LARGE SCALE GENOMIC DNA]</scope>
    <source>
        <strain>ATCC 42149 / RIB 40</strain>
    </source>
</reference>
<comment type="function">
    <text evidence="1">Component of the srb8-11 complex. The srb8-11 complex is a regulatory module of the Mediator complex which is itself involved in regulation of basal and activated RNA polymerase II-dependent transcription. The srb8-11 complex may be involved in the transcriptional repression of a subset of genes regulated by Mediator. It may inhibit the association of the Mediator complex with RNA polymerase II to form the holoenzyme complex. The srb8-11 complex phosphorylates the C-terminal domain (CTD) of the largest subunit of RNA polymerase II (By similarity).</text>
</comment>
<comment type="subunit">
    <text evidence="1">Component of the srb8-11 complex, a regulatory module of the Mediator complex.</text>
</comment>
<comment type="subcellular location">
    <subcellularLocation>
        <location evidence="2">Nucleus</location>
    </subcellularLocation>
</comment>
<comment type="similarity">
    <text evidence="2">Belongs to the cyclin family. Cyclin C subfamily.</text>
</comment>
<comment type="sequence caution" evidence="2">
    <conflict type="erroneous gene model prediction">
        <sequence resource="EMBL-CDS" id="BAE60453"/>
    </conflict>
</comment>